<reference key="1">
    <citation type="journal article" date="2006" name="Antimicrob. Agents Chemother.">
        <title>Complete DNA sequence, comparative genomics, and prevalence of an IncHI2 plasmid occurring among extraintestinal pathogenic Escherichia coli isolates.</title>
        <authorList>
            <person name="Johnson T.J."/>
            <person name="Wannemeuhler Y.M."/>
            <person name="Scaccianoce J.A."/>
            <person name="Johnson S.J."/>
            <person name="Nolan L.K."/>
        </authorList>
    </citation>
    <scope>NUCLEOTIDE SEQUENCE [LARGE SCALE GENOMIC DNA]</scope>
</reference>
<protein>
    <recommendedName>
        <fullName evidence="1">Chaperonin GroEL 2</fullName>
        <ecNumber evidence="1">5.6.1.7</ecNumber>
    </recommendedName>
    <alternativeName>
        <fullName evidence="1">60 kDa chaperonin 2</fullName>
    </alternativeName>
    <alternativeName>
        <fullName evidence="1">Chaperonin-60 2</fullName>
        <shortName evidence="1">Cpn60 2</shortName>
    </alternativeName>
</protein>
<name>CH602_ECOK1</name>
<keyword id="KW-0067">ATP-binding</keyword>
<keyword id="KW-0143">Chaperone</keyword>
<keyword id="KW-0963">Cytoplasm</keyword>
<keyword id="KW-0413">Isomerase</keyword>
<keyword id="KW-0547">Nucleotide-binding</keyword>
<keyword id="KW-0614">Plasmid</keyword>
<keyword id="KW-1185">Reference proteome</keyword>
<geneLocation type="plasmid">
    <name>pAPEC-O1-R</name>
</geneLocation>
<sequence>MAAKDIRFGEDARARMVRGVNVLANAVKATLGPKGRNVVLEKSFGAPTITKDGVSVAKEIELADKFENMGAQMVKEVASKTSDNAGDGTTTATVLAQALIREGMKAVAAGMNPMDLKRGIDKAVTSAVEELKKISKPCSTSKEIAQVGSISANSDTDIGELIAKAMDKVGKEGVITVEEGSGLENELDVVEGMQFDRGYLSPYFINNPQSMQAELEDPFILLHDKKISNVRDLLPILEGVAKAGKPLLIVAEDVEGEALATLVVNTIRGIVKVCAVKAPGFGDRRKAMLEDMAILTGGTVISEEVGLSLEKATINDLGRAKKVQVSKENTTIIDGAGDTADIEARIKQIKAQIEETTSDYDREKLQERVAKLAGGVAVIKVGAATEVEMKEKKARVEDALHATRAAVEEGIVPGGGVALIRAKAAIAELKGANEDQNHGIAIALRAMEAPLREIVTNAGDEPSVVLNRVAEGTGAFGYNAANGEFGDMIEFGILDPTKVTRSALQNAASIAGLMITTEAMVAEAPKKEEPAAPGGGMGGMGGMDF</sequence>
<evidence type="ECO:0000255" key="1">
    <source>
        <dbReference type="HAMAP-Rule" id="MF_00600"/>
    </source>
</evidence>
<comment type="function">
    <text evidence="1">Together with its co-chaperonin GroES, plays an essential role in assisting protein folding. The GroEL-GroES system forms a nano-cage that allows encapsulation of the non-native substrate proteins and provides a physical environment optimized to promote and accelerate protein folding.</text>
</comment>
<comment type="catalytic activity">
    <reaction evidence="1">
        <text>ATP + H2O + a folded polypeptide = ADP + phosphate + an unfolded polypeptide.</text>
        <dbReference type="EC" id="5.6.1.7"/>
    </reaction>
</comment>
<comment type="subunit">
    <text evidence="1">Forms a cylinder of 14 subunits composed of two heptameric rings stacked back-to-back. Interacts with the co-chaperonin GroES.</text>
</comment>
<comment type="subcellular location">
    <subcellularLocation>
        <location evidence="1">Cytoplasm</location>
    </subcellularLocation>
</comment>
<comment type="similarity">
    <text evidence="1">Belongs to the chaperonin (HSP60) family.</text>
</comment>
<gene>
    <name evidence="1" type="primary">groEL2</name>
    <name evidence="1" type="synonym">groL2</name>
    <name type="ordered locus">Ecok1_R_48900</name>
    <name type="ORF">APECO1_O1R91</name>
    <name type="ORF">O1R_91</name>
</gene>
<organism>
    <name type="scientific">Escherichia coli O1:K1 / APEC</name>
    <dbReference type="NCBI Taxonomy" id="405955"/>
    <lineage>
        <taxon>Bacteria</taxon>
        <taxon>Pseudomonadati</taxon>
        <taxon>Pseudomonadota</taxon>
        <taxon>Gammaproteobacteria</taxon>
        <taxon>Enterobacterales</taxon>
        <taxon>Enterobacteriaceae</taxon>
        <taxon>Escherichia</taxon>
    </lineage>
</organism>
<proteinExistence type="inferred from homology"/>
<dbReference type="EC" id="5.6.1.7" evidence="1"/>
<dbReference type="EMBL" id="DQ517526">
    <property type="protein sequence ID" value="ABF67773.1"/>
    <property type="molecule type" value="Genomic_DNA"/>
</dbReference>
<dbReference type="SMR" id="Q19NJ4"/>
<dbReference type="KEGG" id="ecv:APECO1_O1R91"/>
<dbReference type="HOGENOM" id="CLU_016503_3_0_6"/>
<dbReference type="Proteomes" id="UP000008216">
    <property type="component" value="Plasmid pAPEC-O1-R"/>
</dbReference>
<dbReference type="GO" id="GO:0005737">
    <property type="term" value="C:cytoplasm"/>
    <property type="evidence" value="ECO:0007669"/>
    <property type="project" value="UniProtKB-SubCell"/>
</dbReference>
<dbReference type="GO" id="GO:0005524">
    <property type="term" value="F:ATP binding"/>
    <property type="evidence" value="ECO:0007669"/>
    <property type="project" value="UniProtKB-UniRule"/>
</dbReference>
<dbReference type="GO" id="GO:0140662">
    <property type="term" value="F:ATP-dependent protein folding chaperone"/>
    <property type="evidence" value="ECO:0007669"/>
    <property type="project" value="InterPro"/>
</dbReference>
<dbReference type="GO" id="GO:0016853">
    <property type="term" value="F:isomerase activity"/>
    <property type="evidence" value="ECO:0007669"/>
    <property type="project" value="UniProtKB-KW"/>
</dbReference>
<dbReference type="GO" id="GO:0051082">
    <property type="term" value="F:unfolded protein binding"/>
    <property type="evidence" value="ECO:0007669"/>
    <property type="project" value="UniProtKB-UniRule"/>
</dbReference>
<dbReference type="GO" id="GO:0042026">
    <property type="term" value="P:protein refolding"/>
    <property type="evidence" value="ECO:0007669"/>
    <property type="project" value="UniProtKB-UniRule"/>
</dbReference>
<dbReference type="CDD" id="cd03344">
    <property type="entry name" value="GroEL"/>
    <property type="match status" value="1"/>
</dbReference>
<dbReference type="FunFam" id="1.10.560.10:FF:000001">
    <property type="entry name" value="60 kDa chaperonin"/>
    <property type="match status" value="1"/>
</dbReference>
<dbReference type="FunFam" id="3.50.7.10:FF:000001">
    <property type="entry name" value="60 kDa chaperonin"/>
    <property type="match status" value="1"/>
</dbReference>
<dbReference type="Gene3D" id="3.50.7.10">
    <property type="entry name" value="GroEL"/>
    <property type="match status" value="1"/>
</dbReference>
<dbReference type="Gene3D" id="1.10.560.10">
    <property type="entry name" value="GroEL-like equatorial domain"/>
    <property type="match status" value="1"/>
</dbReference>
<dbReference type="Gene3D" id="3.30.260.10">
    <property type="entry name" value="TCP-1-like chaperonin intermediate domain"/>
    <property type="match status" value="1"/>
</dbReference>
<dbReference type="HAMAP" id="MF_00600">
    <property type="entry name" value="CH60"/>
    <property type="match status" value="1"/>
</dbReference>
<dbReference type="InterPro" id="IPR018370">
    <property type="entry name" value="Chaperonin_Cpn60_CS"/>
</dbReference>
<dbReference type="InterPro" id="IPR001844">
    <property type="entry name" value="Cpn60/GroEL"/>
</dbReference>
<dbReference type="InterPro" id="IPR002423">
    <property type="entry name" value="Cpn60/GroEL/TCP-1"/>
</dbReference>
<dbReference type="InterPro" id="IPR027409">
    <property type="entry name" value="GroEL-like_apical_dom_sf"/>
</dbReference>
<dbReference type="InterPro" id="IPR027413">
    <property type="entry name" value="GROEL-like_equatorial_sf"/>
</dbReference>
<dbReference type="InterPro" id="IPR027410">
    <property type="entry name" value="TCP-1-like_intermed_sf"/>
</dbReference>
<dbReference type="NCBIfam" id="TIGR02348">
    <property type="entry name" value="GroEL"/>
    <property type="match status" value="1"/>
</dbReference>
<dbReference type="NCBIfam" id="NF000592">
    <property type="entry name" value="PRK00013.1"/>
    <property type="match status" value="1"/>
</dbReference>
<dbReference type="NCBIfam" id="NF009487">
    <property type="entry name" value="PRK12849.1"/>
    <property type="match status" value="1"/>
</dbReference>
<dbReference type="NCBIfam" id="NF009488">
    <property type="entry name" value="PRK12850.1"/>
    <property type="match status" value="1"/>
</dbReference>
<dbReference type="NCBIfam" id="NF009489">
    <property type="entry name" value="PRK12851.1"/>
    <property type="match status" value="1"/>
</dbReference>
<dbReference type="PANTHER" id="PTHR45633">
    <property type="entry name" value="60 KDA HEAT SHOCK PROTEIN, MITOCHONDRIAL"/>
    <property type="match status" value="1"/>
</dbReference>
<dbReference type="Pfam" id="PF00118">
    <property type="entry name" value="Cpn60_TCP1"/>
    <property type="match status" value="1"/>
</dbReference>
<dbReference type="PRINTS" id="PR00298">
    <property type="entry name" value="CHAPERONIN60"/>
</dbReference>
<dbReference type="SUPFAM" id="SSF52029">
    <property type="entry name" value="GroEL apical domain-like"/>
    <property type="match status" value="1"/>
</dbReference>
<dbReference type="SUPFAM" id="SSF48592">
    <property type="entry name" value="GroEL equatorial domain-like"/>
    <property type="match status" value="1"/>
</dbReference>
<dbReference type="SUPFAM" id="SSF54849">
    <property type="entry name" value="GroEL-intermediate domain like"/>
    <property type="match status" value="1"/>
</dbReference>
<dbReference type="PROSITE" id="PS00296">
    <property type="entry name" value="CHAPERONINS_CPN60"/>
    <property type="match status" value="1"/>
</dbReference>
<accession>Q19NJ4</accession>
<feature type="chain" id="PRO_0000332000" description="Chaperonin GroEL 2">
    <location>
        <begin position="1"/>
        <end position="545"/>
    </location>
</feature>
<feature type="binding site" evidence="1">
    <location>
        <begin position="30"/>
        <end position="33"/>
    </location>
    <ligand>
        <name>ATP</name>
        <dbReference type="ChEBI" id="CHEBI:30616"/>
    </ligand>
</feature>
<feature type="binding site" evidence="1">
    <location>
        <position position="51"/>
    </location>
    <ligand>
        <name>ATP</name>
        <dbReference type="ChEBI" id="CHEBI:30616"/>
    </ligand>
</feature>
<feature type="binding site" evidence="1">
    <location>
        <begin position="87"/>
        <end position="91"/>
    </location>
    <ligand>
        <name>ATP</name>
        <dbReference type="ChEBI" id="CHEBI:30616"/>
    </ligand>
</feature>
<feature type="binding site" evidence="1">
    <location>
        <position position="415"/>
    </location>
    <ligand>
        <name>ATP</name>
        <dbReference type="ChEBI" id="CHEBI:30616"/>
    </ligand>
</feature>
<feature type="binding site" evidence="1">
    <location>
        <begin position="479"/>
        <end position="481"/>
    </location>
    <ligand>
        <name>ATP</name>
        <dbReference type="ChEBI" id="CHEBI:30616"/>
    </ligand>
</feature>
<feature type="binding site" evidence="1">
    <location>
        <position position="495"/>
    </location>
    <ligand>
        <name>ATP</name>
        <dbReference type="ChEBI" id="CHEBI:30616"/>
    </ligand>
</feature>